<dbReference type="EC" id="2.3.1.117" evidence="1"/>
<dbReference type="EMBL" id="AP009179">
    <property type="protein sequence ID" value="BAF72538.1"/>
    <property type="molecule type" value="Genomic_DNA"/>
</dbReference>
<dbReference type="RefSeq" id="WP_012083344.1">
    <property type="nucleotide sequence ID" value="NC_009663.1"/>
</dbReference>
<dbReference type="SMR" id="A6QAM9"/>
<dbReference type="STRING" id="387093.SUN_1588"/>
<dbReference type="KEGG" id="sun:SUN_1588"/>
<dbReference type="eggNOG" id="COG2171">
    <property type="taxonomic scope" value="Bacteria"/>
</dbReference>
<dbReference type="HOGENOM" id="CLU_057490_1_0_7"/>
<dbReference type="OrthoDB" id="9782799at2"/>
<dbReference type="UniPathway" id="UPA00034">
    <property type="reaction ID" value="UER00019"/>
</dbReference>
<dbReference type="Proteomes" id="UP000006378">
    <property type="component" value="Chromosome"/>
</dbReference>
<dbReference type="GO" id="GO:0005737">
    <property type="term" value="C:cytoplasm"/>
    <property type="evidence" value="ECO:0007669"/>
    <property type="project" value="UniProtKB-SubCell"/>
</dbReference>
<dbReference type="GO" id="GO:0008666">
    <property type="term" value="F:2,3,4,5-tetrahydropyridine-2,6-dicarboxylate N-succinyltransferase activity"/>
    <property type="evidence" value="ECO:0007669"/>
    <property type="project" value="UniProtKB-EC"/>
</dbReference>
<dbReference type="GO" id="GO:0019877">
    <property type="term" value="P:diaminopimelate biosynthetic process"/>
    <property type="evidence" value="ECO:0007669"/>
    <property type="project" value="UniProtKB-KW"/>
</dbReference>
<dbReference type="GO" id="GO:0009089">
    <property type="term" value="P:lysine biosynthetic process via diaminopimelate"/>
    <property type="evidence" value="ECO:0007669"/>
    <property type="project" value="UniProtKB-UniPathway"/>
</dbReference>
<dbReference type="CDD" id="cd04649">
    <property type="entry name" value="LbH_THP_succinylT_putative"/>
    <property type="match status" value="1"/>
</dbReference>
<dbReference type="Gene3D" id="3.30.70.2010">
    <property type="match status" value="1"/>
</dbReference>
<dbReference type="Gene3D" id="2.160.10.10">
    <property type="entry name" value="Hexapeptide repeat proteins"/>
    <property type="match status" value="1"/>
</dbReference>
<dbReference type="Gene3D" id="3.30.60.70">
    <property type="entry name" value="Trimeric LpxA-like enzymes"/>
    <property type="match status" value="1"/>
</dbReference>
<dbReference type="HAMAP" id="MF_02122">
    <property type="entry name" value="DapD_type2"/>
    <property type="match status" value="1"/>
</dbReference>
<dbReference type="InterPro" id="IPR001451">
    <property type="entry name" value="Hexapep"/>
</dbReference>
<dbReference type="InterPro" id="IPR032784">
    <property type="entry name" value="THDPS_M"/>
</dbReference>
<dbReference type="InterPro" id="IPR038361">
    <property type="entry name" value="THDPS_M_sf"/>
</dbReference>
<dbReference type="InterPro" id="IPR011004">
    <property type="entry name" value="Trimer_LpxA-like_sf"/>
</dbReference>
<dbReference type="InterPro" id="IPR026586">
    <property type="entry name" value="Type2_DapD"/>
</dbReference>
<dbReference type="Pfam" id="PF14602">
    <property type="entry name" value="Hexapep_2"/>
    <property type="match status" value="1"/>
</dbReference>
<dbReference type="Pfam" id="PF14789">
    <property type="entry name" value="THDPS_M"/>
    <property type="match status" value="1"/>
</dbReference>
<dbReference type="Pfam" id="PF14790">
    <property type="entry name" value="THDPS_N"/>
    <property type="match status" value="1"/>
</dbReference>
<dbReference type="SUPFAM" id="SSF51161">
    <property type="entry name" value="Trimeric LpxA-like enzymes"/>
    <property type="match status" value="1"/>
</dbReference>
<organism>
    <name type="scientific">Sulfurovum sp. (strain NBC37-1)</name>
    <dbReference type="NCBI Taxonomy" id="387093"/>
    <lineage>
        <taxon>Bacteria</taxon>
        <taxon>Pseudomonadati</taxon>
        <taxon>Campylobacterota</taxon>
        <taxon>Epsilonproteobacteria</taxon>
        <taxon>Campylobacterales</taxon>
        <taxon>Sulfurovaceae</taxon>
        <taxon>Sulfurovum</taxon>
    </lineage>
</organism>
<name>DAPD_SULNB</name>
<feature type="chain" id="PRO_0000412271" description="2,3,4,5-tetrahydropyridine-2,6-dicarboxylate N-succinyltransferase">
    <location>
        <begin position="1"/>
        <end position="397"/>
    </location>
</feature>
<feature type="active site" description="Acyl-anhydride intermediate" evidence="1">
    <location>
        <position position="265"/>
    </location>
</feature>
<feature type="binding site" evidence="1">
    <location>
        <position position="267"/>
    </location>
    <ligand>
        <name>succinyl-CoA</name>
        <dbReference type="ChEBI" id="CHEBI:57292"/>
    </ligand>
</feature>
<feature type="binding site" evidence="1">
    <location>
        <position position="282"/>
    </location>
    <ligand>
        <name>succinyl-CoA</name>
        <dbReference type="ChEBI" id="CHEBI:57292"/>
    </ligand>
</feature>
<feature type="binding site" evidence="1">
    <location>
        <position position="285"/>
    </location>
    <ligand>
        <name>succinyl-CoA</name>
        <dbReference type="ChEBI" id="CHEBI:57292"/>
    </ligand>
</feature>
<feature type="binding site" evidence="1">
    <location>
        <position position="308"/>
    </location>
    <ligand>
        <name>succinyl-CoA</name>
        <dbReference type="ChEBI" id="CHEBI:57292"/>
    </ligand>
</feature>
<feature type="binding site" evidence="1">
    <location>
        <begin position="323"/>
        <end position="324"/>
    </location>
    <ligand>
        <name>succinyl-CoA</name>
        <dbReference type="ChEBI" id="CHEBI:57292"/>
    </ligand>
</feature>
<feature type="binding site" evidence="1">
    <location>
        <position position="331"/>
    </location>
    <ligand>
        <name>succinyl-CoA</name>
        <dbReference type="ChEBI" id="CHEBI:57292"/>
    </ligand>
</feature>
<feature type="binding site" evidence="1">
    <location>
        <position position="360"/>
    </location>
    <ligand>
        <name>succinyl-CoA</name>
        <dbReference type="ChEBI" id="CHEBI:57292"/>
    </ligand>
</feature>
<feature type="binding site" evidence="1">
    <location>
        <begin position="373"/>
        <end position="376"/>
    </location>
    <ligand>
        <name>succinyl-CoA</name>
        <dbReference type="ChEBI" id="CHEBI:57292"/>
    </ligand>
</feature>
<proteinExistence type="inferred from homology"/>
<protein>
    <recommendedName>
        <fullName evidence="1">2,3,4,5-tetrahydropyridine-2,6-dicarboxylate N-succinyltransferase</fullName>
        <ecNumber evidence="1">2.3.1.117</ecNumber>
    </recommendedName>
    <alternativeName>
        <fullName evidence="1">Tetrahydrodipicolinate N-succinyltransferase</fullName>
        <shortName evidence="1">THDP succinyltransferase</shortName>
        <shortName evidence="1">THP succinyltransferase</shortName>
    </alternativeName>
    <alternativeName>
        <fullName evidence="1">Tetrahydropicolinate succinylase</fullName>
    </alternativeName>
</protein>
<gene>
    <name evidence="1" type="primary">dapD</name>
    <name type="ordered locus">SUN_1588</name>
</gene>
<comment type="function">
    <text evidence="1">Catalyzes the conversion of the cyclic tetrahydrodipicolinate (THDP) into the acyclic N-succinyl-L-2-amino-6-oxopimelate using succinyl-CoA.</text>
</comment>
<comment type="catalytic activity">
    <reaction evidence="1">
        <text>(S)-2,3,4,5-tetrahydrodipicolinate + succinyl-CoA + H2O = (S)-2-succinylamino-6-oxoheptanedioate + CoA</text>
        <dbReference type="Rhea" id="RHEA:17325"/>
        <dbReference type="ChEBI" id="CHEBI:15377"/>
        <dbReference type="ChEBI" id="CHEBI:15685"/>
        <dbReference type="ChEBI" id="CHEBI:16845"/>
        <dbReference type="ChEBI" id="CHEBI:57287"/>
        <dbReference type="ChEBI" id="CHEBI:57292"/>
        <dbReference type="EC" id="2.3.1.117"/>
    </reaction>
</comment>
<comment type="pathway">
    <text evidence="1">Amino-acid biosynthesis; L-lysine biosynthesis via DAP pathway; LL-2,6-diaminopimelate from (S)-tetrahydrodipicolinate (succinylase route): step 1/3.</text>
</comment>
<comment type="subunit">
    <text evidence="1">Homotrimer.</text>
</comment>
<comment type="subcellular location">
    <subcellularLocation>
        <location evidence="1">Cytoplasm</location>
    </subcellularLocation>
</comment>
<comment type="similarity">
    <text evidence="1">Belongs to the type 2 tetrahydrodipicolinate N-succinyltransferase family.</text>
</comment>
<accession>A6QAM9</accession>
<evidence type="ECO:0000255" key="1">
    <source>
        <dbReference type="HAMAP-Rule" id="MF_02122"/>
    </source>
</evidence>
<reference key="1">
    <citation type="journal article" date="2007" name="Proc. Natl. Acad. Sci. U.S.A.">
        <title>Deep-sea vent epsilon-proteobacterial genomes provide insights into emergence of pathogens.</title>
        <authorList>
            <person name="Nakagawa S."/>
            <person name="Takaki Y."/>
            <person name="Shimamura S."/>
            <person name="Reysenbach A.-L."/>
            <person name="Takai K."/>
            <person name="Horikoshi K."/>
        </authorList>
    </citation>
    <scope>NUCLEOTIDE SEQUENCE [LARGE SCALE GENOMIC DNA]</scope>
    <source>
        <strain>NBC37-1</strain>
    </source>
</reference>
<sequence length="397" mass="42618">MAIETVASTDAFKVLVAEVTAQEGYREPMAFGIARVDRGQKNAEKVLQANFPLINWKENFGSAAVFIKALQEAKCDVDFSGSEFVATINDNFVANAMAAFAPYLAEATGDSHKNVQVIKTLAKMEDIGKNFRIVFLFEDANPESVEAVYLKLYALSLRKAELRKVNLNGAFGILSNVAWVGNTPYELDYLRENEIEMKLNGTYPTVDSVDKFPRFLQHVIPDDNTRILEASKVRMGAQLAAGTTVMPGASYINFNAGTLGPVMVEGRISSSAIVGAGSDVGGGASILGVLSGTDGNPISIGENTLLGANSVTGLPLGDGCIVDAGITILAGTKIKIAPEELEKIKAANPDAKLDNKTTFKGEELQGLNGIHYRQNSLTGEIIARRSTREVKLNEDLH</sequence>
<keyword id="KW-0012">Acyltransferase</keyword>
<keyword id="KW-0028">Amino-acid biosynthesis</keyword>
<keyword id="KW-0963">Cytoplasm</keyword>
<keyword id="KW-0220">Diaminopimelate biosynthesis</keyword>
<keyword id="KW-0457">Lysine biosynthesis</keyword>
<keyword id="KW-0808">Transferase</keyword>